<gene>
    <name evidence="1" type="primary">atpF</name>
    <name type="ordered locus">SNSL254_A4150</name>
</gene>
<name>ATPF_SALNS</name>
<feature type="chain" id="PRO_0000368745" description="ATP synthase subunit b">
    <location>
        <begin position="1"/>
        <end position="156"/>
    </location>
</feature>
<feature type="transmembrane region" description="Helical" evidence="1">
    <location>
        <begin position="11"/>
        <end position="31"/>
    </location>
</feature>
<sequence>MNLNATILGQAIAFILFVWFCMKYVWPPLMAAIEKRQKEIADGLASAERAHKDLDLAKASATDQLKKAKAEAQVIIEQANKRRAQILDEAKTEAEQERTKIVAQAQAEIEAERKRAREELRKQVAILAVAGAEKIIERSVDEAANSDIVDKLVAEL</sequence>
<evidence type="ECO:0000255" key="1">
    <source>
        <dbReference type="HAMAP-Rule" id="MF_01398"/>
    </source>
</evidence>
<proteinExistence type="inferred from homology"/>
<organism>
    <name type="scientific">Salmonella newport (strain SL254)</name>
    <dbReference type="NCBI Taxonomy" id="423368"/>
    <lineage>
        <taxon>Bacteria</taxon>
        <taxon>Pseudomonadati</taxon>
        <taxon>Pseudomonadota</taxon>
        <taxon>Gammaproteobacteria</taxon>
        <taxon>Enterobacterales</taxon>
        <taxon>Enterobacteriaceae</taxon>
        <taxon>Salmonella</taxon>
    </lineage>
</organism>
<protein>
    <recommendedName>
        <fullName evidence="1">ATP synthase subunit b</fullName>
    </recommendedName>
    <alternativeName>
        <fullName evidence="1">ATP synthase F(0) sector subunit b</fullName>
    </alternativeName>
    <alternativeName>
        <fullName evidence="1">ATPase subunit I</fullName>
    </alternativeName>
    <alternativeName>
        <fullName evidence="1">F-type ATPase subunit b</fullName>
        <shortName evidence="1">F-ATPase subunit b</shortName>
    </alternativeName>
</protein>
<accession>B4SYD5</accession>
<comment type="function">
    <text evidence="1">F(1)F(0) ATP synthase produces ATP from ADP in the presence of a proton or sodium gradient. F-type ATPases consist of two structural domains, F(1) containing the extramembraneous catalytic core and F(0) containing the membrane proton channel, linked together by a central stalk and a peripheral stalk. During catalysis, ATP synthesis in the catalytic domain of F(1) is coupled via a rotary mechanism of the central stalk subunits to proton translocation.</text>
</comment>
<comment type="function">
    <text evidence="1">Component of the F(0) channel, it forms part of the peripheral stalk, linking F(1) to F(0).</text>
</comment>
<comment type="subunit">
    <text evidence="1">F-type ATPases have 2 components, F(1) - the catalytic core - and F(0) - the membrane proton channel. F(1) has five subunits: alpha(3), beta(3), gamma(1), delta(1), epsilon(1). F(0) has three main subunits: a(1), b(2) and c(10-14). The alpha and beta chains form an alternating ring which encloses part of the gamma chain. F(1) is attached to F(0) by a central stalk formed by the gamma and epsilon chains, while a peripheral stalk is formed by the delta and b chains.</text>
</comment>
<comment type="subcellular location">
    <subcellularLocation>
        <location evidence="1">Cell inner membrane</location>
        <topology evidence="1">Single-pass membrane protein</topology>
    </subcellularLocation>
</comment>
<comment type="similarity">
    <text evidence="1">Belongs to the ATPase B chain family.</text>
</comment>
<keyword id="KW-0066">ATP synthesis</keyword>
<keyword id="KW-0997">Cell inner membrane</keyword>
<keyword id="KW-1003">Cell membrane</keyword>
<keyword id="KW-0138">CF(0)</keyword>
<keyword id="KW-0375">Hydrogen ion transport</keyword>
<keyword id="KW-0406">Ion transport</keyword>
<keyword id="KW-0472">Membrane</keyword>
<keyword id="KW-0812">Transmembrane</keyword>
<keyword id="KW-1133">Transmembrane helix</keyword>
<keyword id="KW-0813">Transport</keyword>
<reference key="1">
    <citation type="journal article" date="2011" name="J. Bacteriol.">
        <title>Comparative genomics of 28 Salmonella enterica isolates: evidence for CRISPR-mediated adaptive sublineage evolution.</title>
        <authorList>
            <person name="Fricke W.F."/>
            <person name="Mammel M.K."/>
            <person name="McDermott P.F."/>
            <person name="Tartera C."/>
            <person name="White D.G."/>
            <person name="Leclerc J.E."/>
            <person name="Ravel J."/>
            <person name="Cebula T.A."/>
        </authorList>
    </citation>
    <scope>NUCLEOTIDE SEQUENCE [LARGE SCALE GENOMIC DNA]</scope>
    <source>
        <strain>SL254</strain>
    </source>
</reference>
<dbReference type="EMBL" id="CP001113">
    <property type="protein sequence ID" value="ACF63846.1"/>
    <property type="molecule type" value="Genomic_DNA"/>
</dbReference>
<dbReference type="RefSeq" id="WP_001052212.1">
    <property type="nucleotide sequence ID" value="NZ_CCMR01000001.1"/>
</dbReference>
<dbReference type="SMR" id="B4SYD5"/>
<dbReference type="GeneID" id="66758158"/>
<dbReference type="KEGG" id="see:SNSL254_A4150"/>
<dbReference type="HOGENOM" id="CLU_079215_4_5_6"/>
<dbReference type="Proteomes" id="UP000008824">
    <property type="component" value="Chromosome"/>
</dbReference>
<dbReference type="GO" id="GO:0005886">
    <property type="term" value="C:plasma membrane"/>
    <property type="evidence" value="ECO:0007669"/>
    <property type="project" value="UniProtKB-SubCell"/>
</dbReference>
<dbReference type="GO" id="GO:0045259">
    <property type="term" value="C:proton-transporting ATP synthase complex"/>
    <property type="evidence" value="ECO:0007669"/>
    <property type="project" value="UniProtKB-KW"/>
</dbReference>
<dbReference type="GO" id="GO:0046933">
    <property type="term" value="F:proton-transporting ATP synthase activity, rotational mechanism"/>
    <property type="evidence" value="ECO:0007669"/>
    <property type="project" value="UniProtKB-UniRule"/>
</dbReference>
<dbReference type="GO" id="GO:0046961">
    <property type="term" value="F:proton-transporting ATPase activity, rotational mechanism"/>
    <property type="evidence" value="ECO:0007669"/>
    <property type="project" value="TreeGrafter"/>
</dbReference>
<dbReference type="CDD" id="cd06503">
    <property type="entry name" value="ATP-synt_Fo_b"/>
    <property type="match status" value="1"/>
</dbReference>
<dbReference type="FunFam" id="1.20.5.620:FF:000001">
    <property type="entry name" value="ATP synthase subunit b"/>
    <property type="match status" value="1"/>
</dbReference>
<dbReference type="Gene3D" id="1.20.5.620">
    <property type="entry name" value="F1F0 ATP synthase subunit B, membrane domain"/>
    <property type="match status" value="1"/>
</dbReference>
<dbReference type="HAMAP" id="MF_01398">
    <property type="entry name" value="ATP_synth_b_bprime"/>
    <property type="match status" value="1"/>
</dbReference>
<dbReference type="InterPro" id="IPR028987">
    <property type="entry name" value="ATP_synth_B-like_membr_sf"/>
</dbReference>
<dbReference type="InterPro" id="IPR002146">
    <property type="entry name" value="ATP_synth_b/b'su_bac/chlpt"/>
</dbReference>
<dbReference type="InterPro" id="IPR005864">
    <property type="entry name" value="ATP_synth_F0_bsu_bac"/>
</dbReference>
<dbReference type="InterPro" id="IPR050059">
    <property type="entry name" value="ATP_synthase_B_chain"/>
</dbReference>
<dbReference type="NCBIfam" id="TIGR01144">
    <property type="entry name" value="ATP_synt_b"/>
    <property type="match status" value="1"/>
</dbReference>
<dbReference type="NCBIfam" id="NF004411">
    <property type="entry name" value="PRK05759.1-2"/>
    <property type="match status" value="1"/>
</dbReference>
<dbReference type="NCBIfam" id="NF004413">
    <property type="entry name" value="PRK05759.1-4"/>
    <property type="match status" value="1"/>
</dbReference>
<dbReference type="PANTHER" id="PTHR33445:SF1">
    <property type="entry name" value="ATP SYNTHASE SUBUNIT B"/>
    <property type="match status" value="1"/>
</dbReference>
<dbReference type="PANTHER" id="PTHR33445">
    <property type="entry name" value="ATP SYNTHASE SUBUNIT B', CHLOROPLASTIC"/>
    <property type="match status" value="1"/>
</dbReference>
<dbReference type="Pfam" id="PF00430">
    <property type="entry name" value="ATP-synt_B"/>
    <property type="match status" value="1"/>
</dbReference>
<dbReference type="SUPFAM" id="SSF81573">
    <property type="entry name" value="F1F0 ATP synthase subunit B, membrane domain"/>
    <property type="match status" value="1"/>
</dbReference>